<organism>
    <name type="scientific">Thermodesulfovibrio yellowstonii (strain ATCC 51303 / DSM 11347 / YP87)</name>
    <dbReference type="NCBI Taxonomy" id="289376"/>
    <lineage>
        <taxon>Bacteria</taxon>
        <taxon>Pseudomonadati</taxon>
        <taxon>Nitrospirota</taxon>
        <taxon>Thermodesulfovibrionia</taxon>
        <taxon>Thermodesulfovibrionales</taxon>
        <taxon>Thermodesulfovibrionaceae</taxon>
        <taxon>Thermodesulfovibrio</taxon>
    </lineage>
</organism>
<gene>
    <name evidence="1" type="primary">pdxJ</name>
    <name type="ordered locus">THEYE_A1671</name>
</gene>
<name>PDXJ_THEYD</name>
<comment type="function">
    <text evidence="1">Catalyzes the complicated ring closure reaction between the two acyclic compounds 1-deoxy-D-xylulose-5-phosphate (DXP) and 3-amino-2-oxopropyl phosphate (1-amino-acetone-3-phosphate or AAP) to form pyridoxine 5'-phosphate (PNP) and inorganic phosphate.</text>
</comment>
<comment type="catalytic activity">
    <reaction evidence="1">
        <text>3-amino-2-oxopropyl phosphate + 1-deoxy-D-xylulose 5-phosphate = pyridoxine 5'-phosphate + phosphate + 2 H2O + H(+)</text>
        <dbReference type="Rhea" id="RHEA:15265"/>
        <dbReference type="ChEBI" id="CHEBI:15377"/>
        <dbReference type="ChEBI" id="CHEBI:15378"/>
        <dbReference type="ChEBI" id="CHEBI:43474"/>
        <dbReference type="ChEBI" id="CHEBI:57279"/>
        <dbReference type="ChEBI" id="CHEBI:57792"/>
        <dbReference type="ChEBI" id="CHEBI:58589"/>
        <dbReference type="EC" id="2.6.99.2"/>
    </reaction>
</comment>
<comment type="pathway">
    <text evidence="1">Cofactor biosynthesis; pyridoxine 5'-phosphate biosynthesis; pyridoxine 5'-phosphate from D-erythrose 4-phosphate: step 5/5.</text>
</comment>
<comment type="subunit">
    <text evidence="1">Homooctamer; tetramer of dimers.</text>
</comment>
<comment type="subcellular location">
    <subcellularLocation>
        <location evidence="1">Cytoplasm</location>
    </subcellularLocation>
</comment>
<comment type="similarity">
    <text evidence="1">Belongs to the PNP synthase family.</text>
</comment>
<protein>
    <recommendedName>
        <fullName evidence="1">Pyridoxine 5'-phosphate synthase</fullName>
        <shortName evidence="1">PNP synthase</shortName>
        <ecNumber evidence="1">2.6.99.2</ecNumber>
    </recommendedName>
</protein>
<accession>B5YGR4</accession>
<sequence>MVILGVNVDHIATVRQARKTFEPDPVMAATLAILGGADGITIHLREDRRHIQDRDLKILREVVPCELNLEMAATEEMINIALNIKPDMVTIVPEKRQELTTEGGLNVIELKDSLKEAIKKIKDAGIPVSLFINPERNDIECSKDIGADMVEIHTGYYSESRGDVQLKELERIKDAVAYSISLGLKTNAGHGLNYYNVKSIAAIKGLRGLYIGHSIIARAVLVGIEKAVREMKNLIKEACINA</sequence>
<dbReference type="EC" id="2.6.99.2" evidence="1"/>
<dbReference type="EMBL" id="CP001147">
    <property type="protein sequence ID" value="ACI21730.1"/>
    <property type="molecule type" value="Genomic_DNA"/>
</dbReference>
<dbReference type="RefSeq" id="WP_012546437.1">
    <property type="nucleotide sequence ID" value="NC_011296.1"/>
</dbReference>
<dbReference type="RefSeq" id="YP_002249462.1">
    <property type="nucleotide sequence ID" value="NC_011296.1"/>
</dbReference>
<dbReference type="SMR" id="B5YGR4"/>
<dbReference type="FunCoup" id="B5YGR4">
    <property type="interactions" value="298"/>
</dbReference>
<dbReference type="STRING" id="289376.THEYE_A1671"/>
<dbReference type="EnsemblBacteria" id="ACI21730">
    <property type="protein sequence ID" value="ACI21730"/>
    <property type="gene ID" value="THEYE_A1671"/>
</dbReference>
<dbReference type="KEGG" id="tye:THEYE_A1671"/>
<dbReference type="PATRIC" id="fig|289376.4.peg.1625"/>
<dbReference type="eggNOG" id="COG0854">
    <property type="taxonomic scope" value="Bacteria"/>
</dbReference>
<dbReference type="HOGENOM" id="CLU_074563_0_0_0"/>
<dbReference type="InParanoid" id="B5YGR4"/>
<dbReference type="OrthoDB" id="9806590at2"/>
<dbReference type="UniPathway" id="UPA00244">
    <property type="reaction ID" value="UER00313"/>
</dbReference>
<dbReference type="Proteomes" id="UP000000718">
    <property type="component" value="Chromosome"/>
</dbReference>
<dbReference type="GO" id="GO:0005829">
    <property type="term" value="C:cytosol"/>
    <property type="evidence" value="ECO:0000318"/>
    <property type="project" value="GO_Central"/>
</dbReference>
<dbReference type="GO" id="GO:0033856">
    <property type="term" value="F:pyridoxine 5'-phosphate synthase activity"/>
    <property type="evidence" value="ECO:0000318"/>
    <property type="project" value="GO_Central"/>
</dbReference>
<dbReference type="GO" id="GO:0008615">
    <property type="term" value="P:pyridoxine biosynthetic process"/>
    <property type="evidence" value="ECO:0000318"/>
    <property type="project" value="GO_Central"/>
</dbReference>
<dbReference type="CDD" id="cd00003">
    <property type="entry name" value="PNPsynthase"/>
    <property type="match status" value="1"/>
</dbReference>
<dbReference type="Gene3D" id="3.20.20.70">
    <property type="entry name" value="Aldolase class I"/>
    <property type="match status" value="1"/>
</dbReference>
<dbReference type="HAMAP" id="MF_00279">
    <property type="entry name" value="PdxJ"/>
    <property type="match status" value="1"/>
</dbReference>
<dbReference type="InterPro" id="IPR013785">
    <property type="entry name" value="Aldolase_TIM"/>
</dbReference>
<dbReference type="InterPro" id="IPR004569">
    <property type="entry name" value="PyrdxlP_synth_PdxJ"/>
</dbReference>
<dbReference type="InterPro" id="IPR036130">
    <property type="entry name" value="Pyridoxine-5'_phos_synth"/>
</dbReference>
<dbReference type="NCBIfam" id="TIGR00559">
    <property type="entry name" value="pdxJ"/>
    <property type="match status" value="1"/>
</dbReference>
<dbReference type="NCBIfam" id="NF003625">
    <property type="entry name" value="PRK05265.1-3"/>
    <property type="match status" value="1"/>
</dbReference>
<dbReference type="NCBIfam" id="NF003627">
    <property type="entry name" value="PRK05265.1-5"/>
    <property type="match status" value="1"/>
</dbReference>
<dbReference type="PANTHER" id="PTHR30456">
    <property type="entry name" value="PYRIDOXINE 5'-PHOSPHATE SYNTHASE"/>
    <property type="match status" value="1"/>
</dbReference>
<dbReference type="PANTHER" id="PTHR30456:SF0">
    <property type="entry name" value="PYRIDOXINE 5'-PHOSPHATE SYNTHASE"/>
    <property type="match status" value="1"/>
</dbReference>
<dbReference type="Pfam" id="PF03740">
    <property type="entry name" value="PdxJ"/>
    <property type="match status" value="1"/>
</dbReference>
<dbReference type="SUPFAM" id="SSF63892">
    <property type="entry name" value="Pyridoxine 5'-phosphate synthase"/>
    <property type="match status" value="1"/>
</dbReference>
<keyword id="KW-0963">Cytoplasm</keyword>
<keyword id="KW-0664">Pyridoxine biosynthesis</keyword>
<keyword id="KW-1185">Reference proteome</keyword>
<keyword id="KW-0808">Transferase</keyword>
<feature type="chain" id="PRO_1000114828" description="Pyridoxine 5'-phosphate synthase">
    <location>
        <begin position="1"/>
        <end position="242"/>
    </location>
</feature>
<feature type="active site" description="Proton acceptor" evidence="1">
    <location>
        <position position="43"/>
    </location>
</feature>
<feature type="active site" description="Proton acceptor" evidence="1">
    <location>
        <position position="70"/>
    </location>
</feature>
<feature type="active site" description="Proton donor" evidence="1">
    <location>
        <position position="190"/>
    </location>
</feature>
<feature type="binding site" evidence="1">
    <location>
        <position position="7"/>
    </location>
    <ligand>
        <name>3-amino-2-oxopropyl phosphate</name>
        <dbReference type="ChEBI" id="CHEBI:57279"/>
    </ligand>
</feature>
<feature type="binding site" evidence="1">
    <location>
        <begin position="9"/>
        <end position="10"/>
    </location>
    <ligand>
        <name>1-deoxy-D-xylulose 5-phosphate</name>
        <dbReference type="ChEBI" id="CHEBI:57792"/>
    </ligand>
</feature>
<feature type="binding site" evidence="1">
    <location>
        <position position="18"/>
    </location>
    <ligand>
        <name>3-amino-2-oxopropyl phosphate</name>
        <dbReference type="ChEBI" id="CHEBI:57279"/>
    </ligand>
</feature>
<feature type="binding site" evidence="1">
    <location>
        <position position="45"/>
    </location>
    <ligand>
        <name>1-deoxy-D-xylulose 5-phosphate</name>
        <dbReference type="ChEBI" id="CHEBI:57792"/>
    </ligand>
</feature>
<feature type="binding site" evidence="1">
    <location>
        <position position="50"/>
    </location>
    <ligand>
        <name>1-deoxy-D-xylulose 5-phosphate</name>
        <dbReference type="ChEBI" id="CHEBI:57792"/>
    </ligand>
</feature>
<feature type="binding site" evidence="1">
    <location>
        <position position="100"/>
    </location>
    <ligand>
        <name>1-deoxy-D-xylulose 5-phosphate</name>
        <dbReference type="ChEBI" id="CHEBI:57792"/>
    </ligand>
</feature>
<feature type="binding site" evidence="1">
    <location>
        <position position="191"/>
    </location>
    <ligand>
        <name>3-amino-2-oxopropyl phosphate</name>
        <dbReference type="ChEBI" id="CHEBI:57279"/>
    </ligand>
</feature>
<feature type="binding site" evidence="1">
    <location>
        <begin position="212"/>
        <end position="213"/>
    </location>
    <ligand>
        <name>3-amino-2-oxopropyl phosphate</name>
        <dbReference type="ChEBI" id="CHEBI:57279"/>
    </ligand>
</feature>
<feature type="site" description="Transition state stabilizer" evidence="1">
    <location>
        <position position="151"/>
    </location>
</feature>
<reference key="1">
    <citation type="submission" date="2008-08" db="EMBL/GenBank/DDBJ databases">
        <title>The complete genome sequence of Thermodesulfovibrio yellowstonii strain ATCC 51303 / DSM 11347 / YP87.</title>
        <authorList>
            <person name="Dodson R.J."/>
            <person name="Durkin A.S."/>
            <person name="Wu M."/>
            <person name="Eisen J."/>
            <person name="Sutton G."/>
        </authorList>
    </citation>
    <scope>NUCLEOTIDE SEQUENCE [LARGE SCALE GENOMIC DNA]</scope>
    <source>
        <strain>ATCC 51303 / DSM 11347 / YP87</strain>
    </source>
</reference>
<evidence type="ECO:0000255" key="1">
    <source>
        <dbReference type="HAMAP-Rule" id="MF_00279"/>
    </source>
</evidence>
<proteinExistence type="inferred from homology"/>